<feature type="chain" id="PRO_0000433122" description="NAC domain-containing protein 76">
    <location>
        <begin position="1"/>
        <end position="377"/>
    </location>
</feature>
<feature type="domain" description="NAC" evidence="3">
    <location>
        <begin position="10"/>
        <end position="159"/>
    </location>
</feature>
<feature type="DNA-binding region" evidence="3">
    <location>
        <begin position="110"/>
        <end position="165"/>
    </location>
</feature>
<feature type="region of interest" description="Disordered" evidence="4">
    <location>
        <begin position="312"/>
        <end position="347"/>
    </location>
</feature>
<feature type="compositionally biased region" description="Basic and acidic residues" evidence="4">
    <location>
        <begin position="318"/>
        <end position="336"/>
    </location>
</feature>
<feature type="compositionally biased region" description="Polar residues" evidence="4">
    <location>
        <begin position="337"/>
        <end position="347"/>
    </location>
</feature>
<accession>O65508</accession>
<proteinExistence type="evidence at protein level"/>
<protein>
    <recommendedName>
        <fullName evidence="9">NAC domain-containing protein 76</fullName>
        <shortName evidence="9">ANAC076</shortName>
    </recommendedName>
    <alternativeName>
        <fullName evidence="10">Protein VASCULAR RELATED NAC-DOMAIN 2</fullName>
    </alternativeName>
</protein>
<evidence type="ECO:0000250" key="1">
    <source>
        <dbReference type="UniProtKB" id="Q9C8W9"/>
    </source>
</evidence>
<evidence type="ECO:0000250" key="2">
    <source>
        <dbReference type="UniProtKB" id="Q9LVA1"/>
    </source>
</evidence>
<evidence type="ECO:0000255" key="3">
    <source>
        <dbReference type="PROSITE-ProRule" id="PRU00353"/>
    </source>
</evidence>
<evidence type="ECO:0000256" key="4">
    <source>
        <dbReference type="SAM" id="MobiDB-lite"/>
    </source>
</evidence>
<evidence type="ECO:0000269" key="5">
    <source>
    </source>
</evidence>
<evidence type="ECO:0000269" key="6">
    <source>
    </source>
</evidence>
<evidence type="ECO:0000269" key="7">
    <source>
    </source>
</evidence>
<evidence type="ECO:0000269" key="8">
    <source>
    </source>
</evidence>
<evidence type="ECO:0000303" key="9">
    <source>
    </source>
</evidence>
<evidence type="ECO:0000303" key="10">
    <source>
    </source>
</evidence>
<evidence type="ECO:0000305" key="11"/>
<evidence type="ECO:0000312" key="12">
    <source>
        <dbReference type="Araport" id="AT4G36160"/>
    </source>
</evidence>
<evidence type="ECO:0000312" key="13">
    <source>
        <dbReference type="EMBL" id="CAA18122.1"/>
    </source>
</evidence>
<evidence type="ECO:0000312" key="14">
    <source>
        <dbReference type="Proteomes" id="UP000006548"/>
    </source>
</evidence>
<dbReference type="EMBL" id="AL022141">
    <property type="protein sequence ID" value="CAA18122.1"/>
    <property type="molecule type" value="Genomic_DNA"/>
</dbReference>
<dbReference type="EMBL" id="AL161588">
    <property type="protein sequence ID" value="CAB81525.1"/>
    <property type="molecule type" value="Genomic_DNA"/>
</dbReference>
<dbReference type="EMBL" id="CP002687">
    <property type="protein sequence ID" value="AEE86626.1"/>
    <property type="molecule type" value="Genomic_DNA"/>
</dbReference>
<dbReference type="EMBL" id="CP002687">
    <property type="protein sequence ID" value="ANM67680.1"/>
    <property type="molecule type" value="Genomic_DNA"/>
</dbReference>
<dbReference type="PIR" id="T04585">
    <property type="entry name" value="T04585"/>
</dbReference>
<dbReference type="RefSeq" id="NP_001329496.1">
    <property type="nucleotide sequence ID" value="NM_001342407.1"/>
</dbReference>
<dbReference type="RefSeq" id="NP_195339.1">
    <property type="nucleotide sequence ID" value="NM_119783.3"/>
</dbReference>
<dbReference type="SMR" id="O65508"/>
<dbReference type="FunCoup" id="O65508">
    <property type="interactions" value="439"/>
</dbReference>
<dbReference type="IntAct" id="O65508">
    <property type="interactions" value="1"/>
</dbReference>
<dbReference type="STRING" id="3702.O65508"/>
<dbReference type="PaxDb" id="3702-AT4G36160.1"/>
<dbReference type="EnsemblPlants" id="AT4G36160.1">
    <property type="protein sequence ID" value="AT4G36160.1"/>
    <property type="gene ID" value="AT4G36160"/>
</dbReference>
<dbReference type="EnsemblPlants" id="AT4G36160.3">
    <property type="protein sequence ID" value="AT4G36160.3"/>
    <property type="gene ID" value="AT4G36160"/>
</dbReference>
<dbReference type="GeneID" id="829773"/>
<dbReference type="Gramene" id="AT4G36160.1">
    <property type="protein sequence ID" value="AT4G36160.1"/>
    <property type="gene ID" value="AT4G36160"/>
</dbReference>
<dbReference type="Gramene" id="AT4G36160.3">
    <property type="protein sequence ID" value="AT4G36160.3"/>
    <property type="gene ID" value="AT4G36160"/>
</dbReference>
<dbReference type="KEGG" id="ath:AT4G36160"/>
<dbReference type="Araport" id="AT4G36160"/>
<dbReference type="TAIR" id="AT4G36160">
    <property type="gene designation" value="NAC076"/>
</dbReference>
<dbReference type="eggNOG" id="ENOG502QQGU">
    <property type="taxonomic scope" value="Eukaryota"/>
</dbReference>
<dbReference type="HOGENOM" id="CLU_035664_1_2_1"/>
<dbReference type="InParanoid" id="O65508"/>
<dbReference type="PhylomeDB" id="O65508"/>
<dbReference type="PRO" id="PR:O65508"/>
<dbReference type="Proteomes" id="UP000006548">
    <property type="component" value="Chromosome 4"/>
</dbReference>
<dbReference type="ExpressionAtlas" id="O65508">
    <property type="expression patterns" value="baseline and differential"/>
</dbReference>
<dbReference type="GO" id="GO:0005634">
    <property type="term" value="C:nucleus"/>
    <property type="evidence" value="ECO:0000314"/>
    <property type="project" value="TAIR"/>
</dbReference>
<dbReference type="GO" id="GO:0003700">
    <property type="term" value="F:DNA-binding transcription factor activity"/>
    <property type="evidence" value="ECO:0000250"/>
    <property type="project" value="UniProtKB"/>
</dbReference>
<dbReference type="GO" id="GO:0043565">
    <property type="term" value="F:sequence-specific DNA binding"/>
    <property type="evidence" value="ECO:0000250"/>
    <property type="project" value="UniProtKB"/>
</dbReference>
<dbReference type="GO" id="GO:0000976">
    <property type="term" value="F:transcription cis-regulatory region binding"/>
    <property type="evidence" value="ECO:0000353"/>
    <property type="project" value="TAIR"/>
</dbReference>
<dbReference type="GO" id="GO:0071555">
    <property type="term" value="P:cell wall organization"/>
    <property type="evidence" value="ECO:0007669"/>
    <property type="project" value="UniProtKB-KW"/>
</dbReference>
<dbReference type="GO" id="GO:1901348">
    <property type="term" value="P:positive regulation of secondary cell wall biogenesis"/>
    <property type="evidence" value="ECO:0000315"/>
    <property type="project" value="TAIR"/>
</dbReference>
<dbReference type="GO" id="GO:0006355">
    <property type="term" value="P:regulation of DNA-templated transcription"/>
    <property type="evidence" value="ECO:0000315"/>
    <property type="project" value="TAIR"/>
</dbReference>
<dbReference type="GO" id="GO:0048759">
    <property type="term" value="P:xylem vessel member cell differentiation"/>
    <property type="evidence" value="ECO:0000315"/>
    <property type="project" value="TAIR"/>
</dbReference>
<dbReference type="FunFam" id="2.170.150.80:FF:000003">
    <property type="entry name" value="NAC domain-containing protein"/>
    <property type="match status" value="1"/>
</dbReference>
<dbReference type="Gene3D" id="2.170.150.80">
    <property type="entry name" value="NAC domain"/>
    <property type="match status" value="1"/>
</dbReference>
<dbReference type="InterPro" id="IPR003441">
    <property type="entry name" value="NAC-dom"/>
</dbReference>
<dbReference type="InterPro" id="IPR036093">
    <property type="entry name" value="NAC_dom_sf"/>
</dbReference>
<dbReference type="PANTHER" id="PTHR31744:SF236">
    <property type="entry name" value="NAC DOMAIN-CONTAINING PROTEIN 105"/>
    <property type="match status" value="1"/>
</dbReference>
<dbReference type="PANTHER" id="PTHR31744">
    <property type="entry name" value="PROTEIN CUP-SHAPED COTYLEDON 2-RELATED"/>
    <property type="match status" value="1"/>
</dbReference>
<dbReference type="Pfam" id="PF02365">
    <property type="entry name" value="NAM"/>
    <property type="match status" value="1"/>
</dbReference>
<dbReference type="SUPFAM" id="SSF101941">
    <property type="entry name" value="NAC domain"/>
    <property type="match status" value="1"/>
</dbReference>
<dbReference type="PROSITE" id="PS51005">
    <property type="entry name" value="NAC"/>
    <property type="match status" value="1"/>
</dbReference>
<name>NAC76_ARATH</name>
<reference key="1">
    <citation type="journal article" date="1999" name="Nature">
        <title>Sequence and analysis of chromosome 4 of the plant Arabidopsis thaliana.</title>
        <authorList>
            <person name="Mayer K.F.X."/>
            <person name="Schueller C."/>
            <person name="Wambutt R."/>
            <person name="Murphy G."/>
            <person name="Volckaert G."/>
            <person name="Pohl T."/>
            <person name="Duesterhoeft A."/>
            <person name="Stiekema W."/>
            <person name="Entian K.-D."/>
            <person name="Terryn N."/>
            <person name="Harris B."/>
            <person name="Ansorge W."/>
            <person name="Brandt P."/>
            <person name="Grivell L.A."/>
            <person name="Rieger M."/>
            <person name="Weichselgartner M."/>
            <person name="de Simone V."/>
            <person name="Obermaier B."/>
            <person name="Mache R."/>
            <person name="Mueller M."/>
            <person name="Kreis M."/>
            <person name="Delseny M."/>
            <person name="Puigdomenech P."/>
            <person name="Watson M."/>
            <person name="Schmidtheini T."/>
            <person name="Reichert B."/>
            <person name="Portetelle D."/>
            <person name="Perez-Alonso M."/>
            <person name="Boutry M."/>
            <person name="Bancroft I."/>
            <person name="Vos P."/>
            <person name="Hoheisel J."/>
            <person name="Zimmermann W."/>
            <person name="Wedler H."/>
            <person name="Ridley P."/>
            <person name="Langham S.-A."/>
            <person name="McCullagh B."/>
            <person name="Bilham L."/>
            <person name="Robben J."/>
            <person name="van der Schueren J."/>
            <person name="Grymonprez B."/>
            <person name="Chuang Y.-J."/>
            <person name="Vandenbussche F."/>
            <person name="Braeken M."/>
            <person name="Weltjens I."/>
            <person name="Voet M."/>
            <person name="Bastiaens I."/>
            <person name="Aert R."/>
            <person name="Defoor E."/>
            <person name="Weitzenegger T."/>
            <person name="Bothe G."/>
            <person name="Ramsperger U."/>
            <person name="Hilbert H."/>
            <person name="Braun M."/>
            <person name="Holzer E."/>
            <person name="Brandt A."/>
            <person name="Peters S."/>
            <person name="van Staveren M."/>
            <person name="Dirkse W."/>
            <person name="Mooijman P."/>
            <person name="Klein Lankhorst R."/>
            <person name="Rose M."/>
            <person name="Hauf J."/>
            <person name="Koetter P."/>
            <person name="Berneiser S."/>
            <person name="Hempel S."/>
            <person name="Feldpausch M."/>
            <person name="Lamberth S."/>
            <person name="Van den Daele H."/>
            <person name="De Keyser A."/>
            <person name="Buysshaert C."/>
            <person name="Gielen J."/>
            <person name="Villarroel R."/>
            <person name="De Clercq R."/>
            <person name="van Montagu M."/>
            <person name="Rogers J."/>
            <person name="Cronin A."/>
            <person name="Quail M.A."/>
            <person name="Bray-Allen S."/>
            <person name="Clark L."/>
            <person name="Doggett J."/>
            <person name="Hall S."/>
            <person name="Kay M."/>
            <person name="Lennard N."/>
            <person name="McLay K."/>
            <person name="Mayes R."/>
            <person name="Pettett A."/>
            <person name="Rajandream M.A."/>
            <person name="Lyne M."/>
            <person name="Benes V."/>
            <person name="Rechmann S."/>
            <person name="Borkova D."/>
            <person name="Bloecker H."/>
            <person name="Scharfe M."/>
            <person name="Grimm M."/>
            <person name="Loehnert T.-H."/>
            <person name="Dose S."/>
            <person name="de Haan M."/>
            <person name="Maarse A.C."/>
            <person name="Schaefer M."/>
            <person name="Mueller-Auer S."/>
            <person name="Gabel C."/>
            <person name="Fuchs M."/>
            <person name="Fartmann B."/>
            <person name="Granderath K."/>
            <person name="Dauner D."/>
            <person name="Herzl A."/>
            <person name="Neumann S."/>
            <person name="Argiriou A."/>
            <person name="Vitale D."/>
            <person name="Liguori R."/>
            <person name="Piravandi E."/>
            <person name="Massenet O."/>
            <person name="Quigley F."/>
            <person name="Clabauld G."/>
            <person name="Muendlein A."/>
            <person name="Felber R."/>
            <person name="Schnabl S."/>
            <person name="Hiller R."/>
            <person name="Schmidt W."/>
            <person name="Lecharny A."/>
            <person name="Aubourg S."/>
            <person name="Chefdor F."/>
            <person name="Cooke R."/>
            <person name="Berger C."/>
            <person name="Monfort A."/>
            <person name="Casacuberta E."/>
            <person name="Gibbons T."/>
            <person name="Weber N."/>
            <person name="Vandenbol M."/>
            <person name="Bargues M."/>
            <person name="Terol J."/>
            <person name="Torres A."/>
            <person name="Perez-Perez A."/>
            <person name="Purnelle B."/>
            <person name="Bent E."/>
            <person name="Johnson S."/>
            <person name="Tacon D."/>
            <person name="Jesse T."/>
            <person name="Heijnen L."/>
            <person name="Schwarz S."/>
            <person name="Scholler P."/>
            <person name="Heber S."/>
            <person name="Francs P."/>
            <person name="Bielke C."/>
            <person name="Frishman D."/>
            <person name="Haase D."/>
            <person name="Lemcke K."/>
            <person name="Mewes H.-W."/>
            <person name="Stocker S."/>
            <person name="Zaccaria P."/>
            <person name="Bevan M."/>
            <person name="Wilson R.K."/>
            <person name="de la Bastide M."/>
            <person name="Habermann K."/>
            <person name="Parnell L."/>
            <person name="Dedhia N."/>
            <person name="Gnoj L."/>
            <person name="Schutz K."/>
            <person name="Huang E."/>
            <person name="Spiegel L."/>
            <person name="Sekhon M."/>
            <person name="Murray J."/>
            <person name="Sheet P."/>
            <person name="Cordes M."/>
            <person name="Abu-Threideh J."/>
            <person name="Stoneking T."/>
            <person name="Kalicki J."/>
            <person name="Graves T."/>
            <person name="Harmon G."/>
            <person name="Edwards J."/>
            <person name="Latreille P."/>
            <person name="Courtney L."/>
            <person name="Cloud J."/>
            <person name="Abbott A."/>
            <person name="Scott K."/>
            <person name="Johnson D."/>
            <person name="Minx P."/>
            <person name="Bentley D."/>
            <person name="Fulton B."/>
            <person name="Miller N."/>
            <person name="Greco T."/>
            <person name="Kemp K."/>
            <person name="Kramer J."/>
            <person name="Fulton L."/>
            <person name="Mardis E."/>
            <person name="Dante M."/>
            <person name="Pepin K."/>
            <person name="Hillier L.W."/>
            <person name="Nelson J."/>
            <person name="Spieth J."/>
            <person name="Ryan E."/>
            <person name="Andrews S."/>
            <person name="Geisel C."/>
            <person name="Layman D."/>
            <person name="Du H."/>
            <person name="Ali J."/>
            <person name="Berghoff A."/>
            <person name="Jones K."/>
            <person name="Drone K."/>
            <person name="Cotton M."/>
            <person name="Joshu C."/>
            <person name="Antonoiu B."/>
            <person name="Zidanic M."/>
            <person name="Strong C."/>
            <person name="Sun H."/>
            <person name="Lamar B."/>
            <person name="Yordan C."/>
            <person name="Ma P."/>
            <person name="Zhong J."/>
            <person name="Preston R."/>
            <person name="Vil D."/>
            <person name="Shekher M."/>
            <person name="Matero A."/>
            <person name="Shah R."/>
            <person name="Swaby I.K."/>
            <person name="O'Shaughnessy A."/>
            <person name="Rodriguez M."/>
            <person name="Hoffman J."/>
            <person name="Till S."/>
            <person name="Granat S."/>
            <person name="Shohdy N."/>
            <person name="Hasegawa A."/>
            <person name="Hameed A."/>
            <person name="Lodhi M."/>
            <person name="Johnson A."/>
            <person name="Chen E."/>
            <person name="Marra M.A."/>
            <person name="Martienssen R."/>
            <person name="McCombie W.R."/>
        </authorList>
    </citation>
    <scope>NUCLEOTIDE SEQUENCE [LARGE SCALE GENOMIC DNA]</scope>
    <source>
        <strain>cv. Columbia</strain>
    </source>
</reference>
<reference key="2">
    <citation type="journal article" date="2017" name="Plant J.">
        <title>Araport11: a complete reannotation of the Arabidopsis thaliana reference genome.</title>
        <authorList>
            <person name="Cheng C.Y."/>
            <person name="Krishnakumar V."/>
            <person name="Chan A.P."/>
            <person name="Thibaud-Nissen F."/>
            <person name="Schobel S."/>
            <person name="Town C.D."/>
        </authorList>
    </citation>
    <scope>GENOME REANNOTATION</scope>
    <source>
        <strain>cv. Columbia</strain>
    </source>
</reference>
<reference key="3">
    <citation type="journal article" date="2003" name="DNA Res.">
        <title>Comprehensive analysis of NAC family genes in Oryza sativa and Arabidopsis thaliana.</title>
        <authorList>
            <person name="Ooka H."/>
            <person name="Satoh K."/>
            <person name="Doi K."/>
            <person name="Nagata T."/>
            <person name="Otomo Y."/>
            <person name="Murakami K."/>
            <person name="Matsubara K."/>
            <person name="Osato N."/>
            <person name="Kawai J."/>
            <person name="Carninci P."/>
            <person name="Hayashizaki Y."/>
            <person name="Suzuki K."/>
            <person name="Kojima K."/>
            <person name="Takahara Y."/>
            <person name="Yamamoto K."/>
            <person name="Kikuchi S."/>
        </authorList>
    </citation>
    <scope>GENE FAMILY</scope>
    <scope>NOMENCLATURE</scope>
</reference>
<reference key="4">
    <citation type="journal article" date="2005" name="Genes Dev.">
        <title>Transcription switches for protoxylem and metaxylem vessel formation.</title>
        <authorList>
            <person name="Kubo M."/>
            <person name="Udagawa M."/>
            <person name="Nishikubo N."/>
            <person name="Horiguchi G."/>
            <person name="Yamaguchi M."/>
            <person name="Ito J."/>
            <person name="Mimura T."/>
            <person name="Fukuda H."/>
            <person name="Demura T."/>
        </authorList>
    </citation>
    <scope>DEVELOPMENTAL STAGE</scope>
    <scope>TISSUE SPECIFICITY</scope>
    <scope>GENE FAMILY</scope>
    <scope>NOMENCLATURE</scope>
</reference>
<reference key="5">
    <citation type="journal article" date="2006" name="Proc. Natl. Acad. Sci. U.S.A.">
        <title>Transcriptional and posttranscriptional regulation of transcription factor expression in Arabidopsis roots.</title>
        <authorList>
            <person name="Lee J.-Y."/>
            <person name="Colinas J."/>
            <person name="Wang J.Y."/>
            <person name="Mace D."/>
            <person name="Ohler U."/>
            <person name="Benfey P.N."/>
        </authorList>
    </citation>
    <scope>TISSUE SPECIFICITY</scope>
</reference>
<reference key="6">
    <citation type="journal article" date="2008" name="Plant J.">
        <title>Vascular-related NAC-DOMAIN7 is involved in the differentiation of all types of xylem vessels in Arabidopsis roots and shoots.</title>
        <authorList>
            <person name="Yamaguchi M."/>
            <person name="Kubo M."/>
            <person name="Fukuda H."/>
            <person name="Demura T."/>
        </authorList>
    </citation>
    <scope>TISSUE SPECIFICITY</scope>
    <scope>INTERACTION WITH NAC030/VND7</scope>
    <source>
        <strain>cv. Columbia</strain>
    </source>
</reference>
<reference key="7">
    <citation type="journal article" date="2014" name="PLoS ONE">
        <title>Arabidopsis NAC domain proteins, VND1 to VND5, are transcriptional regulators of secondary wall biosynthesis in vessels.</title>
        <authorList>
            <person name="Zhou J."/>
            <person name="Zhong R."/>
            <person name="Ye Z.-H."/>
        </authorList>
    </citation>
    <scope>FUNCTION</scope>
    <scope>TISSUE SPECIFICITY</scope>
    <scope>DEVELOPMENTAL STAGE</scope>
</reference>
<sequence>MESVDQSCSVPPGFRFHPTDEELVGYYLRKKVASQKIDLDVIRDIDLYRIEPWDLQESCRIGYEERNEWYFFSHKDKKYPTGTRTNRATMAGFWKATGRDKAVYDKSKLIGMRKTLVFYKGRAPNGQKTDWIMHEYRLESDENAPPQEEGWVVCRAFKKKPMTGQAKNTETWSSSYFYDELPSGVRSVTEPLNYVSKQKQNVFAQDLMFKQELEGSDIGLNFIHCDQFIQLPQLESPSLPLTKRPVSLTSITSLEKNKNIYKRHLIEEDVSFNALISSGNKDKKKKKTSVMTTDWRALDKFVASQLMSQEDGVSGFGGHHEEDNNKIGHYNNEESNNKGSVETASSTLLSDREEENRFISGLLCSNLDYDLYRDLHV</sequence>
<keyword id="KW-0010">Activator</keyword>
<keyword id="KW-0961">Cell wall biogenesis/degradation</keyword>
<keyword id="KW-0217">Developmental protein</keyword>
<keyword id="KW-0238">DNA-binding</keyword>
<keyword id="KW-0539">Nucleus</keyword>
<keyword id="KW-1185">Reference proteome</keyword>
<keyword id="KW-0804">Transcription</keyword>
<keyword id="KW-0805">Transcription regulation</keyword>
<organism evidence="14">
    <name type="scientific">Arabidopsis thaliana</name>
    <name type="common">Mouse-ear cress</name>
    <dbReference type="NCBI Taxonomy" id="3702"/>
    <lineage>
        <taxon>Eukaryota</taxon>
        <taxon>Viridiplantae</taxon>
        <taxon>Streptophyta</taxon>
        <taxon>Embryophyta</taxon>
        <taxon>Tracheophyta</taxon>
        <taxon>Spermatophyta</taxon>
        <taxon>Magnoliopsida</taxon>
        <taxon>eudicotyledons</taxon>
        <taxon>Gunneridae</taxon>
        <taxon>Pentapetalae</taxon>
        <taxon>rosids</taxon>
        <taxon>malvids</taxon>
        <taxon>Brassicales</taxon>
        <taxon>Brassicaceae</taxon>
        <taxon>Camelineae</taxon>
        <taxon>Arabidopsis</taxon>
    </lineage>
</organism>
<comment type="function">
    <text evidence="2 8">Transcription activator that binds to the secondary wall NAC binding element (SNBE), 5'-(T/A)NN(C/T)(T/C/G)TNNNNNNNA(A/C)GN(A/C/T)(A/T)-3', in the promoter of target genes (By similarity). Involved in xylem formation by promoting the expression of secondary wall-associated transcription factors and of genes involved in secondary wall biosynthesis and programmed cell death, genes driven by the secondary wall NAC binding element (SNBE). Triggers thickening of secondary walls (PubMed:25148240).</text>
</comment>
<comment type="subunit">
    <text evidence="7">Interacts with NAC030/VND7.</text>
</comment>
<comment type="subcellular location">
    <subcellularLocation>
        <location evidence="1 3">Nucleus</location>
    </subcellularLocation>
</comment>
<comment type="tissue specificity">
    <text evidence="5 6 7 8">Detected in root protoxylem and metaxylem poles and in vessels of protoxylems, outermost metaxylems, inner metaxylems, shoots and hypocotyls (PubMed:18445131). Expressed in roots, hypocotyls, cotyledons and leaves. Present in developing xylems (PubMed:16103214, PubMed:16581911). Specifically expressed in vessels but not in interfascicular fibers in stems (PubMed:25148240).</text>
</comment>
<comment type="developmental stage">
    <text evidence="5 8">Up-regulated during xylem vessel element formation. Expressed preferentially in procambial cells adjacent to root meristem.</text>
</comment>
<comment type="domain">
    <text evidence="3">The NAC domain includes a DNA binding domain and a dimerization domain.</text>
</comment>
<comment type="similarity">
    <text evidence="11">Belongs to the plant vascular related NAC-domain protein family.</text>
</comment>
<gene>
    <name evidence="9" type="primary">NAC076</name>
    <name evidence="10" type="synonym">VND2</name>
    <name evidence="12" type="ordered locus">At4g36160</name>
    <name evidence="13" type="ORF">F23E13.50</name>
</gene>